<dbReference type="EC" id="2.1.1.-" evidence="1"/>
<dbReference type="EMBL" id="CP001074">
    <property type="protein sequence ID" value="ACE91927.1"/>
    <property type="molecule type" value="Genomic_DNA"/>
</dbReference>
<dbReference type="SMR" id="B3PTU0"/>
<dbReference type="KEGG" id="rec:RHECIAT_CH0002978"/>
<dbReference type="eggNOG" id="COG2264">
    <property type="taxonomic scope" value="Bacteria"/>
</dbReference>
<dbReference type="HOGENOM" id="CLU_049382_3_0_5"/>
<dbReference type="Proteomes" id="UP000008817">
    <property type="component" value="Chromosome"/>
</dbReference>
<dbReference type="GO" id="GO:0005737">
    <property type="term" value="C:cytoplasm"/>
    <property type="evidence" value="ECO:0007669"/>
    <property type="project" value="UniProtKB-SubCell"/>
</dbReference>
<dbReference type="GO" id="GO:0016279">
    <property type="term" value="F:protein-lysine N-methyltransferase activity"/>
    <property type="evidence" value="ECO:0007669"/>
    <property type="project" value="RHEA"/>
</dbReference>
<dbReference type="GO" id="GO:0032259">
    <property type="term" value="P:methylation"/>
    <property type="evidence" value="ECO:0007669"/>
    <property type="project" value="UniProtKB-KW"/>
</dbReference>
<dbReference type="CDD" id="cd02440">
    <property type="entry name" value="AdoMet_MTases"/>
    <property type="match status" value="1"/>
</dbReference>
<dbReference type="Gene3D" id="3.40.50.150">
    <property type="entry name" value="Vaccinia Virus protein VP39"/>
    <property type="match status" value="1"/>
</dbReference>
<dbReference type="HAMAP" id="MF_00735">
    <property type="entry name" value="Methyltr_PrmA"/>
    <property type="match status" value="1"/>
</dbReference>
<dbReference type="InterPro" id="IPR050078">
    <property type="entry name" value="Ribosomal_L11_MeTrfase_PrmA"/>
</dbReference>
<dbReference type="InterPro" id="IPR004498">
    <property type="entry name" value="Ribosomal_PrmA_MeTrfase"/>
</dbReference>
<dbReference type="InterPro" id="IPR029063">
    <property type="entry name" value="SAM-dependent_MTases_sf"/>
</dbReference>
<dbReference type="NCBIfam" id="NF001784">
    <property type="entry name" value="PRK00517.2-1"/>
    <property type="match status" value="1"/>
</dbReference>
<dbReference type="PANTHER" id="PTHR43648">
    <property type="entry name" value="ELECTRON TRANSFER FLAVOPROTEIN BETA SUBUNIT LYSINE METHYLTRANSFERASE"/>
    <property type="match status" value="1"/>
</dbReference>
<dbReference type="PANTHER" id="PTHR43648:SF1">
    <property type="entry name" value="ELECTRON TRANSFER FLAVOPROTEIN BETA SUBUNIT LYSINE METHYLTRANSFERASE"/>
    <property type="match status" value="1"/>
</dbReference>
<dbReference type="Pfam" id="PF06325">
    <property type="entry name" value="PrmA"/>
    <property type="match status" value="1"/>
</dbReference>
<dbReference type="PIRSF" id="PIRSF000401">
    <property type="entry name" value="RPL11_MTase"/>
    <property type="match status" value="1"/>
</dbReference>
<dbReference type="SUPFAM" id="SSF53335">
    <property type="entry name" value="S-adenosyl-L-methionine-dependent methyltransferases"/>
    <property type="match status" value="1"/>
</dbReference>
<sequence>MSEIRLYVSTTESQAEQILDLLSEVFGEEDFAIGTTEVDEKRDIWEASVYMMAEDEAQVRSRVETALKSGFPDAQLLREVIPDVDWVVKSLEGLKPVRAGRFLVHGSHDRDKVRPGDIAIEIDAGQAFGTGHHGTTAGCLEVIDRVVRSRRVRNALDLGTGSGVLAIAVRKLKNIPVLATDIDPIATRVAAENVRRNGIASGIVTRTAPGFHSTAFSEHGPFDLIIANILARPLIRMAPQLAAHLAPAGSVILSGILAAQRWKVIAAYSGARLRHVRTIWRNGWVTIHFDRP</sequence>
<comment type="function">
    <text evidence="1">Methylates ribosomal protein L11.</text>
</comment>
<comment type="catalytic activity">
    <reaction evidence="1">
        <text>L-lysyl-[protein] + 3 S-adenosyl-L-methionine = N(6),N(6),N(6)-trimethyl-L-lysyl-[protein] + 3 S-adenosyl-L-homocysteine + 3 H(+)</text>
        <dbReference type="Rhea" id="RHEA:54192"/>
        <dbReference type="Rhea" id="RHEA-COMP:9752"/>
        <dbReference type="Rhea" id="RHEA-COMP:13826"/>
        <dbReference type="ChEBI" id="CHEBI:15378"/>
        <dbReference type="ChEBI" id="CHEBI:29969"/>
        <dbReference type="ChEBI" id="CHEBI:57856"/>
        <dbReference type="ChEBI" id="CHEBI:59789"/>
        <dbReference type="ChEBI" id="CHEBI:61961"/>
    </reaction>
</comment>
<comment type="subcellular location">
    <subcellularLocation>
        <location evidence="1">Cytoplasm</location>
    </subcellularLocation>
</comment>
<comment type="similarity">
    <text evidence="1">Belongs to the methyltransferase superfamily. PrmA family.</text>
</comment>
<name>PRMA_RHIE6</name>
<proteinExistence type="inferred from homology"/>
<feature type="chain" id="PRO_1000192654" description="Ribosomal protein L11 methyltransferase">
    <location>
        <begin position="1"/>
        <end position="292"/>
    </location>
</feature>
<feature type="binding site" evidence="1">
    <location>
        <position position="136"/>
    </location>
    <ligand>
        <name>S-adenosyl-L-methionine</name>
        <dbReference type="ChEBI" id="CHEBI:59789"/>
    </ligand>
</feature>
<feature type="binding site" evidence="1">
    <location>
        <position position="159"/>
    </location>
    <ligand>
        <name>S-adenosyl-L-methionine</name>
        <dbReference type="ChEBI" id="CHEBI:59789"/>
    </ligand>
</feature>
<feature type="binding site" evidence="1">
    <location>
        <position position="181"/>
    </location>
    <ligand>
        <name>S-adenosyl-L-methionine</name>
        <dbReference type="ChEBI" id="CHEBI:59789"/>
    </ligand>
</feature>
<feature type="binding site" evidence="1">
    <location>
        <position position="228"/>
    </location>
    <ligand>
        <name>S-adenosyl-L-methionine</name>
        <dbReference type="ChEBI" id="CHEBI:59789"/>
    </ligand>
</feature>
<accession>B3PTU0</accession>
<organism>
    <name type="scientific">Rhizobium etli (strain CIAT 652)</name>
    <dbReference type="NCBI Taxonomy" id="491916"/>
    <lineage>
        <taxon>Bacteria</taxon>
        <taxon>Pseudomonadati</taxon>
        <taxon>Pseudomonadota</taxon>
        <taxon>Alphaproteobacteria</taxon>
        <taxon>Hyphomicrobiales</taxon>
        <taxon>Rhizobiaceae</taxon>
        <taxon>Rhizobium/Agrobacterium group</taxon>
        <taxon>Rhizobium</taxon>
    </lineage>
</organism>
<evidence type="ECO:0000255" key="1">
    <source>
        <dbReference type="HAMAP-Rule" id="MF_00735"/>
    </source>
</evidence>
<reference key="1">
    <citation type="journal article" date="2010" name="Appl. Environ. Microbiol.">
        <title>Conserved symbiotic plasmid DNA sequences in the multireplicon pangenomic structure of Rhizobium etli.</title>
        <authorList>
            <person name="Gonzalez V."/>
            <person name="Acosta J.L."/>
            <person name="Santamaria R.I."/>
            <person name="Bustos P."/>
            <person name="Fernandez J.L."/>
            <person name="Hernandez Gonzalez I.L."/>
            <person name="Diaz R."/>
            <person name="Flores M."/>
            <person name="Palacios R."/>
            <person name="Mora J."/>
            <person name="Davila G."/>
        </authorList>
    </citation>
    <scope>NUCLEOTIDE SEQUENCE [LARGE SCALE GENOMIC DNA]</scope>
    <source>
        <strain>CIAT 652</strain>
    </source>
</reference>
<protein>
    <recommendedName>
        <fullName evidence="1">Ribosomal protein L11 methyltransferase</fullName>
        <shortName evidence="1">L11 Mtase</shortName>
        <ecNumber evidence="1">2.1.1.-</ecNumber>
    </recommendedName>
</protein>
<keyword id="KW-0963">Cytoplasm</keyword>
<keyword id="KW-0489">Methyltransferase</keyword>
<keyword id="KW-0949">S-adenosyl-L-methionine</keyword>
<keyword id="KW-0808">Transferase</keyword>
<gene>
    <name evidence="1" type="primary">prmA</name>
    <name type="ordered locus">RHECIAT_CH0002978</name>
</gene>